<accession>B2V7L9</accession>
<feature type="chain" id="PRO_0000353444" description="DNA-directed RNA polymerase subunit beta'">
    <location>
        <begin position="1"/>
        <end position="1579"/>
    </location>
</feature>
<feature type="binding site" evidence="1">
    <location>
        <position position="65"/>
    </location>
    <ligand>
        <name>Zn(2+)</name>
        <dbReference type="ChEBI" id="CHEBI:29105"/>
        <label>1</label>
    </ligand>
</feature>
<feature type="binding site" evidence="1">
    <location>
        <position position="67"/>
    </location>
    <ligand>
        <name>Zn(2+)</name>
        <dbReference type="ChEBI" id="CHEBI:29105"/>
        <label>1</label>
    </ligand>
</feature>
<feature type="binding site" evidence="1">
    <location>
        <position position="80"/>
    </location>
    <ligand>
        <name>Zn(2+)</name>
        <dbReference type="ChEBI" id="CHEBI:29105"/>
        <label>1</label>
    </ligand>
</feature>
<feature type="binding site" evidence="1">
    <location>
        <position position="83"/>
    </location>
    <ligand>
        <name>Zn(2+)</name>
        <dbReference type="ChEBI" id="CHEBI:29105"/>
        <label>1</label>
    </ligand>
</feature>
<feature type="binding site" evidence="1">
    <location>
        <position position="601"/>
    </location>
    <ligand>
        <name>Mg(2+)</name>
        <dbReference type="ChEBI" id="CHEBI:18420"/>
    </ligand>
</feature>
<feature type="binding site" evidence="1">
    <location>
        <position position="603"/>
    </location>
    <ligand>
        <name>Mg(2+)</name>
        <dbReference type="ChEBI" id="CHEBI:18420"/>
    </ligand>
</feature>
<feature type="binding site" evidence="1">
    <location>
        <position position="605"/>
    </location>
    <ligand>
        <name>Mg(2+)</name>
        <dbReference type="ChEBI" id="CHEBI:18420"/>
    </ligand>
</feature>
<feature type="binding site" evidence="1">
    <location>
        <position position="938"/>
    </location>
    <ligand>
        <name>Zn(2+)</name>
        <dbReference type="ChEBI" id="CHEBI:29105"/>
        <label>2</label>
    </ligand>
</feature>
<feature type="binding site" evidence="1">
    <location>
        <position position="1012"/>
    </location>
    <ligand>
        <name>Zn(2+)</name>
        <dbReference type="ChEBI" id="CHEBI:29105"/>
        <label>2</label>
    </ligand>
</feature>
<feature type="binding site" evidence="1">
    <location>
        <position position="1019"/>
    </location>
    <ligand>
        <name>Zn(2+)</name>
        <dbReference type="ChEBI" id="CHEBI:29105"/>
        <label>2</label>
    </ligand>
</feature>
<feature type="binding site" evidence="1">
    <location>
        <position position="1022"/>
    </location>
    <ligand>
        <name>Zn(2+)</name>
        <dbReference type="ChEBI" id="CHEBI:29105"/>
        <label>2</label>
    </ligand>
</feature>
<protein>
    <recommendedName>
        <fullName evidence="1">DNA-directed RNA polymerase subunit beta'</fullName>
        <shortName evidence="1">RNAP subunit beta'</shortName>
        <ecNumber evidence="1">2.7.7.6</ecNumber>
    </recommendedName>
    <alternativeName>
        <fullName evidence="1">RNA polymerase subunit beta'</fullName>
    </alternativeName>
    <alternativeName>
        <fullName evidence="1">Transcriptase subunit beta'</fullName>
    </alternativeName>
</protein>
<dbReference type="EC" id="2.7.7.6" evidence="1"/>
<dbReference type="EMBL" id="CP001080">
    <property type="protein sequence ID" value="ACD65942.1"/>
    <property type="molecule type" value="Genomic_DNA"/>
</dbReference>
<dbReference type="RefSeq" id="WP_012459030.1">
    <property type="nucleotide sequence ID" value="NC_010730.1"/>
</dbReference>
<dbReference type="SMR" id="B2V7L9"/>
<dbReference type="STRING" id="436114.SYO3AOP1_0297"/>
<dbReference type="KEGG" id="sul:SYO3AOP1_0297"/>
<dbReference type="eggNOG" id="COG0086">
    <property type="taxonomic scope" value="Bacteria"/>
</dbReference>
<dbReference type="HOGENOM" id="CLU_000524_3_1_0"/>
<dbReference type="GO" id="GO:0000428">
    <property type="term" value="C:DNA-directed RNA polymerase complex"/>
    <property type="evidence" value="ECO:0007669"/>
    <property type="project" value="UniProtKB-KW"/>
</dbReference>
<dbReference type="GO" id="GO:0003677">
    <property type="term" value="F:DNA binding"/>
    <property type="evidence" value="ECO:0007669"/>
    <property type="project" value="UniProtKB-UniRule"/>
</dbReference>
<dbReference type="GO" id="GO:0003899">
    <property type="term" value="F:DNA-directed RNA polymerase activity"/>
    <property type="evidence" value="ECO:0007669"/>
    <property type="project" value="UniProtKB-UniRule"/>
</dbReference>
<dbReference type="GO" id="GO:0000287">
    <property type="term" value="F:magnesium ion binding"/>
    <property type="evidence" value="ECO:0007669"/>
    <property type="project" value="UniProtKB-UniRule"/>
</dbReference>
<dbReference type="GO" id="GO:0008270">
    <property type="term" value="F:zinc ion binding"/>
    <property type="evidence" value="ECO:0007669"/>
    <property type="project" value="UniProtKB-UniRule"/>
</dbReference>
<dbReference type="GO" id="GO:0006351">
    <property type="term" value="P:DNA-templated transcription"/>
    <property type="evidence" value="ECO:0007669"/>
    <property type="project" value="UniProtKB-UniRule"/>
</dbReference>
<dbReference type="CDD" id="cd02655">
    <property type="entry name" value="RNAP_beta'_C"/>
    <property type="match status" value="1"/>
</dbReference>
<dbReference type="CDD" id="cd01609">
    <property type="entry name" value="RNAP_beta'_N"/>
    <property type="match status" value="1"/>
</dbReference>
<dbReference type="Gene3D" id="1.10.132.30">
    <property type="match status" value="1"/>
</dbReference>
<dbReference type="Gene3D" id="1.10.150.390">
    <property type="match status" value="1"/>
</dbReference>
<dbReference type="Gene3D" id="1.10.1790.20">
    <property type="match status" value="1"/>
</dbReference>
<dbReference type="Gene3D" id="1.10.40.90">
    <property type="match status" value="1"/>
</dbReference>
<dbReference type="Gene3D" id="2.40.40.20">
    <property type="match status" value="1"/>
</dbReference>
<dbReference type="Gene3D" id="2.40.50.100">
    <property type="match status" value="4"/>
</dbReference>
<dbReference type="Gene3D" id="4.10.860.120">
    <property type="entry name" value="RNA polymerase II, clamp domain"/>
    <property type="match status" value="1"/>
</dbReference>
<dbReference type="Gene3D" id="1.10.274.100">
    <property type="entry name" value="RNA polymerase Rpb1, domain 3"/>
    <property type="match status" value="2"/>
</dbReference>
<dbReference type="HAMAP" id="MF_01322">
    <property type="entry name" value="RNApol_bact_RpoC"/>
    <property type="match status" value="1"/>
</dbReference>
<dbReference type="InterPro" id="IPR012756">
    <property type="entry name" value="DNA-dir_RpoC2_beta_pp"/>
</dbReference>
<dbReference type="InterPro" id="IPR045867">
    <property type="entry name" value="DNA-dir_RpoC_beta_prime"/>
</dbReference>
<dbReference type="InterPro" id="IPR012754">
    <property type="entry name" value="DNA-dir_RpoC_beta_prime_bact"/>
</dbReference>
<dbReference type="InterPro" id="IPR000722">
    <property type="entry name" value="RNA_pol_asu"/>
</dbReference>
<dbReference type="InterPro" id="IPR006592">
    <property type="entry name" value="RNA_pol_N"/>
</dbReference>
<dbReference type="InterPro" id="IPR007080">
    <property type="entry name" value="RNA_pol_Rpb1_1"/>
</dbReference>
<dbReference type="InterPro" id="IPR007066">
    <property type="entry name" value="RNA_pol_Rpb1_3"/>
</dbReference>
<dbReference type="InterPro" id="IPR042102">
    <property type="entry name" value="RNA_pol_Rpb1_3_sf"/>
</dbReference>
<dbReference type="InterPro" id="IPR007083">
    <property type="entry name" value="RNA_pol_Rpb1_4"/>
</dbReference>
<dbReference type="InterPro" id="IPR007081">
    <property type="entry name" value="RNA_pol_Rpb1_5"/>
</dbReference>
<dbReference type="InterPro" id="IPR044893">
    <property type="entry name" value="RNA_pol_Rpb1_clamp_domain"/>
</dbReference>
<dbReference type="InterPro" id="IPR038120">
    <property type="entry name" value="Rpb1_funnel_sf"/>
</dbReference>
<dbReference type="InterPro" id="IPR011054">
    <property type="entry name" value="Rudment_hybrid_motif"/>
</dbReference>
<dbReference type="NCBIfam" id="TIGR02388">
    <property type="entry name" value="rpoC2_cyan"/>
    <property type="match status" value="1"/>
</dbReference>
<dbReference type="NCBIfam" id="TIGR02386">
    <property type="entry name" value="rpoC_TIGR"/>
    <property type="match status" value="1"/>
</dbReference>
<dbReference type="PANTHER" id="PTHR19376">
    <property type="entry name" value="DNA-DIRECTED RNA POLYMERASE"/>
    <property type="match status" value="1"/>
</dbReference>
<dbReference type="PANTHER" id="PTHR19376:SF54">
    <property type="entry name" value="DNA-DIRECTED RNA POLYMERASE SUBUNIT BETA"/>
    <property type="match status" value="1"/>
</dbReference>
<dbReference type="Pfam" id="PF04997">
    <property type="entry name" value="RNA_pol_Rpb1_1"/>
    <property type="match status" value="1"/>
</dbReference>
<dbReference type="Pfam" id="PF00623">
    <property type="entry name" value="RNA_pol_Rpb1_2"/>
    <property type="match status" value="2"/>
</dbReference>
<dbReference type="Pfam" id="PF04983">
    <property type="entry name" value="RNA_pol_Rpb1_3"/>
    <property type="match status" value="1"/>
</dbReference>
<dbReference type="Pfam" id="PF05000">
    <property type="entry name" value="RNA_pol_Rpb1_4"/>
    <property type="match status" value="1"/>
</dbReference>
<dbReference type="Pfam" id="PF04998">
    <property type="entry name" value="RNA_pol_Rpb1_5"/>
    <property type="match status" value="1"/>
</dbReference>
<dbReference type="SMART" id="SM00663">
    <property type="entry name" value="RPOLA_N"/>
    <property type="match status" value="1"/>
</dbReference>
<dbReference type="SUPFAM" id="SSF64484">
    <property type="entry name" value="beta and beta-prime subunits of DNA dependent RNA-polymerase"/>
    <property type="match status" value="1"/>
</dbReference>
<dbReference type="SUPFAM" id="SSF51246">
    <property type="entry name" value="Rudiment single hybrid motif"/>
    <property type="match status" value="1"/>
</dbReference>
<reference key="1">
    <citation type="journal article" date="2009" name="J. Bacteriol.">
        <title>Complete and draft genome sequences of six members of the Aquificales.</title>
        <authorList>
            <person name="Reysenbach A.-L."/>
            <person name="Hamamura N."/>
            <person name="Podar M."/>
            <person name="Griffiths E."/>
            <person name="Ferreira S."/>
            <person name="Hochstein R."/>
            <person name="Heidelberg J."/>
            <person name="Johnson J."/>
            <person name="Mead D."/>
            <person name="Pohorille A."/>
            <person name="Sarmiento M."/>
            <person name="Schweighofer K."/>
            <person name="Seshadri R."/>
            <person name="Voytek M.A."/>
        </authorList>
    </citation>
    <scope>NUCLEOTIDE SEQUENCE [LARGE SCALE GENOMIC DNA]</scope>
    <source>
        <strain>YO3AOP1</strain>
    </source>
</reference>
<sequence>MEAKERKETVRFDAIRLSLASPEIIRSWSHGEVKKPETLNYRTLKPEKDGLFDARIFGPIKDYECLCGKYKKRKYEGTICDRCGVEVTRSDVRRERFGHIELASPVVHIWYLKSTPSKIGSLLDLTSRDIERVVYFESYLVIEHPTEEEEEAFEKDPKSLPLMEGGLTKYVKLHVVSEDEFREREYEYSNAEKYEYGMGAEKVKDVLARIDLEILAKRLKKDLHGYAGTFDDLNLSYKMNYPRLYNKAIIEIARKFSEVGLRFGDIEPTEKEIDVIISQGYYIVIDPASSDLKFGQIINPENVDSLPEGVIALTGVEALEKLYKAYREKVKEIPIFEVIKESVRNVILKEGTDARLKKIIRRLRLVEGFIESENKPEWMILEVLPVIPPDLRPLIALDGGRFASSDLNDLYRRVINRNNRLKRLIDLDAPEIIIRNEKRMLQEAVDALIDNGRRGRMVTQNNRPLKSLSDSLRGKEGRFRQNLLGKRVDYSGRSVIVVGPELQMHECGLPKQMALELFKPFIYRRLEEKGYATSIKSAKKLVEEKVPEVYECLEEVVKQHPVLLNRAPTLHRMSVQAFEPKLVEGKAIKLHPLVCPPFNADFDGDQMAVHVPLSVEAQLESYILMLSTQNILSPAHGKPVTMPSQDIILGVHYMTQELPNAKGEGKIFGSPEEAVTAYELGTIDLLAKIKVRINGKIVETTAGRIIFNQILPEGYKFVNEVLDKKKISKLISDIYEKYGNEIAAQTLDKIKEIGFRFATKAAVSISVADLVVPKKKAKILEKAIKEAETVWKQYVDGIITKGERHNKIIDIWSQATNEVAKEMFNEIEKSERVENGKKYPGYFNPVYMMASSGARGSRDQIRQLAGMRGLMAKHSGEFIETPIMSNFREGLSVVEYFISTYGARKGLADTALKTAVAGYLTRRLADVAQDVIITGEDCGTLKGITVSSIIESGEIVVPFKDRIIGRYTAEDVYDPYTGELLISANEEITEEVVDKFEKAGIEKVKIRSVLTCEMPHGVCAKCYGRDLAQRKLVDIGEAVGIIAAQSIGEPGTQLTMRTFHIGGAATAKEVQTQHKATHDGTVKLQNVKFVVDKKGRKLIINREGSIKILDKEGKTIERFPAPYGAVLYVEDGQEVKEGTILAEWEPFSDPIIAEKGGEVELRDVILDVTLKEERDNITGKTIYTITFLRPKDAQLHTPRLVIKGEDGNEYVYDLPVNTILLIPKENLEEVWDKCFACSEAEKTDIHHKYLQVKKGFKVSEGDVVAKIPKEKAKVRDIVGGLPRVEELLEAREPKNKAIITEIDGIVKIYEDAKEITLINPKEGKTETYKVPDTTFVIVKNGSFVKAGQSLVDDGSIVAEFDGMVRLKSEGSRIVVFNKETGQQKDYKVPKGKFIIVKDNSVVKAGDPLTDGTPNPHDILRVMGIEELAAFLVKEAQIVYRLQGVEINDKHFEVIIRQILRKVKIVDPGDSRFLLNEIVDKLDLEEEINKVISEGGRPPKAEPVLVGITKAALTTRSWISAASFQETTRVLADAAVEGKVDPLKGLKENVIIGGIIPAGTGIKEYSEVEVVLKEEEKEEV</sequence>
<name>RPOC_SULSY</name>
<evidence type="ECO:0000255" key="1">
    <source>
        <dbReference type="HAMAP-Rule" id="MF_01322"/>
    </source>
</evidence>
<gene>
    <name evidence="1" type="primary">rpoC</name>
    <name type="ordered locus">SYO3AOP1_0297</name>
</gene>
<organism>
    <name type="scientific">Sulfurihydrogenibium sp. (strain YO3AOP1)</name>
    <dbReference type="NCBI Taxonomy" id="436114"/>
    <lineage>
        <taxon>Bacteria</taxon>
        <taxon>Pseudomonadati</taxon>
        <taxon>Aquificota</taxon>
        <taxon>Aquificia</taxon>
        <taxon>Aquificales</taxon>
        <taxon>Hydrogenothermaceae</taxon>
        <taxon>Sulfurihydrogenibium</taxon>
    </lineage>
</organism>
<proteinExistence type="inferred from homology"/>
<keyword id="KW-0240">DNA-directed RNA polymerase</keyword>
<keyword id="KW-0460">Magnesium</keyword>
<keyword id="KW-0479">Metal-binding</keyword>
<keyword id="KW-0548">Nucleotidyltransferase</keyword>
<keyword id="KW-0804">Transcription</keyword>
<keyword id="KW-0808">Transferase</keyword>
<keyword id="KW-0862">Zinc</keyword>
<comment type="function">
    <text evidence="1">DNA-dependent RNA polymerase catalyzes the transcription of DNA into RNA using the four ribonucleoside triphosphates as substrates.</text>
</comment>
<comment type="catalytic activity">
    <reaction evidence="1">
        <text>RNA(n) + a ribonucleoside 5'-triphosphate = RNA(n+1) + diphosphate</text>
        <dbReference type="Rhea" id="RHEA:21248"/>
        <dbReference type="Rhea" id="RHEA-COMP:14527"/>
        <dbReference type="Rhea" id="RHEA-COMP:17342"/>
        <dbReference type="ChEBI" id="CHEBI:33019"/>
        <dbReference type="ChEBI" id="CHEBI:61557"/>
        <dbReference type="ChEBI" id="CHEBI:140395"/>
        <dbReference type="EC" id="2.7.7.6"/>
    </reaction>
</comment>
<comment type="cofactor">
    <cofactor evidence="1">
        <name>Mg(2+)</name>
        <dbReference type="ChEBI" id="CHEBI:18420"/>
    </cofactor>
    <text evidence="1">Binds 1 Mg(2+) ion per subunit.</text>
</comment>
<comment type="cofactor">
    <cofactor evidence="1">
        <name>Zn(2+)</name>
        <dbReference type="ChEBI" id="CHEBI:29105"/>
    </cofactor>
    <text evidence="1">Binds 2 Zn(2+) ions per subunit.</text>
</comment>
<comment type="subunit">
    <text evidence="1">The RNAP catalytic core consists of 2 alpha, 1 beta, 1 beta' and 1 omega subunit. When a sigma factor is associated with the core the holoenzyme is formed, which can initiate transcription.</text>
</comment>
<comment type="similarity">
    <text evidence="1">Belongs to the RNA polymerase beta' chain family.</text>
</comment>